<gene>
    <name type="primary">CHO2</name>
    <name type="ORF">CAWG_01594</name>
</gene>
<protein>
    <recommendedName>
        <fullName evidence="1">Phosphatidylethanolamine N-methyltransferase</fullName>
        <shortName evidence="1">PE methyltransferase</shortName>
        <shortName evidence="1">PEAMT</shortName>
        <shortName evidence="1">PEMT</shortName>
        <ecNumber evidence="1">2.1.1.17</ecNumber>
    </recommendedName>
</protein>
<feature type="chain" id="PRO_0000405881" description="Phosphatidylethanolamine N-methyltransferase">
    <location>
        <begin position="1"/>
        <end position="889"/>
    </location>
</feature>
<feature type="topological domain" description="Lumenal" evidence="1">
    <location>
        <begin position="1"/>
        <end position="63"/>
    </location>
</feature>
<feature type="transmembrane region" description="Helical" evidence="1">
    <location>
        <begin position="64"/>
        <end position="84"/>
    </location>
</feature>
<feature type="topological domain" description="Cytoplasmic" evidence="1">
    <location>
        <begin position="85"/>
        <end position="91"/>
    </location>
</feature>
<feature type="transmembrane region" description="Helical" evidence="1">
    <location>
        <begin position="92"/>
        <end position="112"/>
    </location>
</feature>
<feature type="topological domain" description="Lumenal" evidence="1">
    <location>
        <begin position="113"/>
        <end position="173"/>
    </location>
</feature>
<feature type="transmembrane region" description="Helical" evidence="1">
    <location>
        <begin position="174"/>
        <end position="194"/>
    </location>
</feature>
<feature type="topological domain" description="Cytoplasmic" evidence="1">
    <location>
        <begin position="195"/>
        <end position="205"/>
    </location>
</feature>
<feature type="transmembrane region" description="Helical" evidence="1">
    <location>
        <begin position="206"/>
        <end position="226"/>
    </location>
</feature>
<feature type="topological domain" description="Lumenal" evidence="1">
    <location>
        <begin position="227"/>
        <end position="261"/>
    </location>
</feature>
<feature type="transmembrane region" description="Helical" evidence="1">
    <location>
        <begin position="262"/>
        <end position="282"/>
    </location>
</feature>
<feature type="topological domain" description="Cytoplasmic" evidence="1">
    <location>
        <begin position="283"/>
        <end position="284"/>
    </location>
</feature>
<feature type="transmembrane region" description="Helical" evidence="1">
    <location>
        <begin position="285"/>
        <end position="305"/>
    </location>
</feature>
<feature type="topological domain" description="Lumenal" evidence="1">
    <location>
        <begin position="306"/>
        <end position="354"/>
    </location>
</feature>
<feature type="transmembrane region" description="Helical" evidence="1">
    <location>
        <begin position="355"/>
        <end position="375"/>
    </location>
</feature>
<feature type="topological domain" description="Cytoplasmic" evidence="1">
    <location>
        <begin position="376"/>
        <end position="377"/>
    </location>
</feature>
<feature type="transmembrane region" description="Helical" evidence="1">
    <location>
        <begin position="378"/>
        <end position="398"/>
    </location>
</feature>
<feature type="topological domain" description="Lumenal" evidence="1">
    <location>
        <begin position="399"/>
        <end position="423"/>
    </location>
</feature>
<feature type="transmembrane region" description="Helical" evidence="1">
    <location>
        <begin position="424"/>
        <end position="444"/>
    </location>
</feature>
<feature type="topological domain" description="Cytoplasmic" evidence="1">
    <location>
        <begin position="445"/>
        <end position="470"/>
    </location>
</feature>
<feature type="transmembrane region" description="Helical" evidence="1">
    <location>
        <begin position="471"/>
        <end position="491"/>
    </location>
</feature>
<feature type="topological domain" description="Lumenal" evidence="1">
    <location>
        <begin position="492"/>
        <end position="527"/>
    </location>
</feature>
<feature type="transmembrane region" description="Helical" evidence="1">
    <location>
        <begin position="528"/>
        <end position="548"/>
    </location>
</feature>
<feature type="topological domain" description="Cytoplasmic" evidence="1">
    <location>
        <begin position="549"/>
        <end position="889"/>
    </location>
</feature>
<feature type="region of interest" description="Disordered" evidence="2">
    <location>
        <begin position="606"/>
        <end position="627"/>
    </location>
</feature>
<sequence length="889" mass="102629">MTFTINNTNSTVFDSTNNENMTISEPVQPVSKGPKGITFSGETFIVPETHDMVKTLFDPTVKKSNFELIILSCLFSNLLVFLIPNNQIRIYIFIALYIFWRLSYNFGIGWLLQNQSNHNLLVSWSQKYHLFDPENKGALAQSIQNEIKSQRGENYDIKSMPVEFNTWLIFRKFVDLILMSDFITFCCVVYCSAIKDDYQFINNQSFWLVYSRIVLGSGLILFNLWVKVNAHNTIKDYAWYWGDFFFRQINNEELIFDGVFEMVPHPMYSVGYVGYYGFALIAKSYVVLAIAIFGHFLQMIFLHYIENPHIDKIYGPSKNEINLIKILKLKDLKNFDNLKPLVGLTNFNWMRASDIVNLVLSLTYGIIIPLFANSIKSLFILTVGMKLFESISINLSLTLQSYFKIVTKWSLSNDIPVEKSFSNWAVLYNSLINLTYSSLFGMNLGYFLQKSGSGSSSGGLLFSDWFYLRVFLGLLLIYTQFWINFSIIDSIGYFGWFYGDFFIPKSQSSIKNITTAGVYRYLNNPEQIFGVCGVMGIFLIYPTVENFVCVGLWVVNNFIRINFIEKSHMVKLYGEQEVNRDSGVTKTVKKHLLPEVIQRRMSNDEAYTRVNGTTHERRRRRSSNLHGNSVADSLDNFIRDLRNSSTKLSQQKLIELSQNLSFANSDYKLTIDGLKMQSTESDELKYTTIGTPVTVSWTSPTENHSVRDWIGLYKIVQTSYSRNKTILSSAGRWTWCKEPKGSFIFDKEKLFWEEGVYEFRYHLDGKHDVAYISEPFEIKSIELKVPEFKEDAIKFAENLKLEIFDKVIKLTDINEAISPIANQSDNVIEVYKLISSMISKSTKINITYKIFLNQGDDDLLSIKDVAIKLINIKHVLEELSYNITDKKDV</sequence>
<dbReference type="EC" id="2.1.1.17" evidence="1"/>
<dbReference type="EMBL" id="CM000309">
    <property type="protein sequence ID" value="EEQ43359.1"/>
    <property type="molecule type" value="Genomic_DNA"/>
</dbReference>
<dbReference type="PaxDb" id="5476-C4YL78"/>
<dbReference type="VEuPathDB" id="FungiDB:CAWG_01594"/>
<dbReference type="HOGENOM" id="CLU_005987_0_1_1"/>
<dbReference type="OMA" id="RIWYSVG"/>
<dbReference type="OrthoDB" id="9581at766764"/>
<dbReference type="UniPathway" id="UPA00753"/>
<dbReference type="Proteomes" id="UP000001429">
    <property type="component" value="Chromosome R"/>
</dbReference>
<dbReference type="GO" id="GO:0005789">
    <property type="term" value="C:endoplasmic reticulum membrane"/>
    <property type="evidence" value="ECO:0007669"/>
    <property type="project" value="UniProtKB-SubCell"/>
</dbReference>
<dbReference type="GO" id="GO:0004608">
    <property type="term" value="F:phosphatidylethanolamine N-methyltransferase activity"/>
    <property type="evidence" value="ECO:0007669"/>
    <property type="project" value="UniProtKB-UniRule"/>
</dbReference>
<dbReference type="GO" id="GO:0032259">
    <property type="term" value="P:methylation"/>
    <property type="evidence" value="ECO:0007669"/>
    <property type="project" value="UniProtKB-KW"/>
</dbReference>
<dbReference type="GO" id="GO:0006656">
    <property type="term" value="P:phosphatidylcholine biosynthetic process"/>
    <property type="evidence" value="ECO:0007669"/>
    <property type="project" value="UniProtKB-UniRule"/>
</dbReference>
<dbReference type="FunFam" id="1.20.120.1630:FF:000016">
    <property type="entry name" value="Phosphatidylethanolamine N-methyltransferase"/>
    <property type="match status" value="1"/>
</dbReference>
<dbReference type="Gene3D" id="1.20.120.1630">
    <property type="match status" value="1"/>
</dbReference>
<dbReference type="Gene3D" id="2.60.40.2840">
    <property type="match status" value="1"/>
</dbReference>
<dbReference type="HAMAP" id="MF_03217">
    <property type="entry name" value="PEMT"/>
    <property type="match status" value="1"/>
</dbReference>
<dbReference type="InterPro" id="IPR007318">
    <property type="entry name" value="Phopholipid_MeTrfase"/>
</dbReference>
<dbReference type="InterPro" id="IPR016219">
    <property type="entry name" value="Phosphatid-EA_MeTrfase_fun"/>
</dbReference>
<dbReference type="PANTHER" id="PTHR32138">
    <property type="entry name" value="PHOSPHATIDYLETHANOLAMINE N-METHYLTRANSFERASE"/>
    <property type="match status" value="1"/>
</dbReference>
<dbReference type="PANTHER" id="PTHR32138:SF0">
    <property type="entry name" value="PHOSPHATIDYLETHANOLAMINE N-METHYLTRANSFERASE"/>
    <property type="match status" value="1"/>
</dbReference>
<dbReference type="Pfam" id="PF04191">
    <property type="entry name" value="PEMT"/>
    <property type="match status" value="2"/>
</dbReference>
<dbReference type="PIRSF" id="PIRSF000383">
    <property type="entry name" value="PEAMT"/>
    <property type="match status" value="1"/>
</dbReference>
<dbReference type="PROSITE" id="PS50244">
    <property type="entry name" value="S5A_REDUCTASE"/>
    <property type="match status" value="1"/>
</dbReference>
<dbReference type="PROSITE" id="PS51598">
    <property type="entry name" value="SAM_CHO2"/>
    <property type="match status" value="1"/>
</dbReference>
<proteinExistence type="inferred from homology"/>
<comment type="function">
    <text evidence="1">Catalyzes the first step of the methylation pathway of phosphatidylcholine biosynthesis, the SAM-dependent methylation of phosphatidylethanolamine (PE) to phosphatidylmonomethylethanolamine (PMME).</text>
</comment>
<comment type="catalytic activity">
    <reaction evidence="1">
        <text>a 1,2-diacyl-sn-glycero-3-phosphoethanolamine + S-adenosyl-L-methionine = a 1,2-diacyl-sn-glycero-3-phospho-N-methylethanolamine + S-adenosyl-L-homocysteine + H(+)</text>
        <dbReference type="Rhea" id="RHEA:11164"/>
        <dbReference type="ChEBI" id="CHEBI:15378"/>
        <dbReference type="ChEBI" id="CHEBI:57856"/>
        <dbReference type="ChEBI" id="CHEBI:59789"/>
        <dbReference type="ChEBI" id="CHEBI:64573"/>
        <dbReference type="ChEBI" id="CHEBI:64612"/>
        <dbReference type="EC" id="2.1.1.17"/>
    </reaction>
</comment>
<comment type="pathway">
    <text evidence="1">Phospholipid metabolism; phosphatidylcholine biosynthesis.</text>
</comment>
<comment type="subcellular location">
    <subcellularLocation>
        <location evidence="1">Endoplasmic reticulum membrane</location>
        <topology evidence="1">Multi-pass membrane protein</topology>
    </subcellularLocation>
</comment>
<comment type="similarity">
    <text evidence="1">Belongs to the class VI-like SAM-binding methyltransferase superfamily. CHO2 family.</text>
</comment>
<reference key="1">
    <citation type="journal article" date="2009" name="Nature">
        <title>Evolution of pathogenicity and sexual reproduction in eight Candida genomes.</title>
        <authorList>
            <person name="Butler G."/>
            <person name="Rasmussen M.D."/>
            <person name="Lin M.F."/>
            <person name="Santos M.A.S."/>
            <person name="Sakthikumar S."/>
            <person name="Munro C.A."/>
            <person name="Rheinbay E."/>
            <person name="Grabherr M."/>
            <person name="Forche A."/>
            <person name="Reedy J.L."/>
            <person name="Agrafioti I."/>
            <person name="Arnaud M.B."/>
            <person name="Bates S."/>
            <person name="Brown A.J.P."/>
            <person name="Brunke S."/>
            <person name="Costanzo M.C."/>
            <person name="Fitzpatrick D.A."/>
            <person name="de Groot P.W.J."/>
            <person name="Harris D."/>
            <person name="Hoyer L.L."/>
            <person name="Hube B."/>
            <person name="Klis F.M."/>
            <person name="Kodira C."/>
            <person name="Lennard N."/>
            <person name="Logue M.E."/>
            <person name="Martin R."/>
            <person name="Neiman A.M."/>
            <person name="Nikolaou E."/>
            <person name="Quail M.A."/>
            <person name="Quinn J."/>
            <person name="Santos M.C."/>
            <person name="Schmitzberger F.F."/>
            <person name="Sherlock G."/>
            <person name="Shah P."/>
            <person name="Silverstein K.A.T."/>
            <person name="Skrzypek M.S."/>
            <person name="Soll D."/>
            <person name="Staggs R."/>
            <person name="Stansfield I."/>
            <person name="Stumpf M.P.H."/>
            <person name="Sudbery P.E."/>
            <person name="Srikantha T."/>
            <person name="Zeng Q."/>
            <person name="Berman J."/>
            <person name="Berriman M."/>
            <person name="Heitman J."/>
            <person name="Gow N.A.R."/>
            <person name="Lorenz M.C."/>
            <person name="Birren B.W."/>
            <person name="Kellis M."/>
            <person name="Cuomo C.A."/>
        </authorList>
    </citation>
    <scope>NUCLEOTIDE SEQUENCE [LARGE SCALE GENOMIC DNA]</scope>
    <source>
        <strain>WO-1</strain>
    </source>
</reference>
<accession>C4YL78</accession>
<name>CHO2_CANAW</name>
<keyword id="KW-0256">Endoplasmic reticulum</keyword>
<keyword id="KW-0444">Lipid biosynthesis</keyword>
<keyword id="KW-0443">Lipid metabolism</keyword>
<keyword id="KW-0472">Membrane</keyword>
<keyword id="KW-0489">Methyltransferase</keyword>
<keyword id="KW-0594">Phospholipid biosynthesis</keyword>
<keyword id="KW-1208">Phospholipid metabolism</keyword>
<keyword id="KW-0949">S-adenosyl-L-methionine</keyword>
<keyword id="KW-0808">Transferase</keyword>
<keyword id="KW-0812">Transmembrane</keyword>
<keyword id="KW-1133">Transmembrane helix</keyword>
<organism>
    <name type="scientific">Candida albicans (strain WO-1)</name>
    <name type="common">Yeast</name>
    <dbReference type="NCBI Taxonomy" id="294748"/>
    <lineage>
        <taxon>Eukaryota</taxon>
        <taxon>Fungi</taxon>
        <taxon>Dikarya</taxon>
        <taxon>Ascomycota</taxon>
        <taxon>Saccharomycotina</taxon>
        <taxon>Pichiomycetes</taxon>
        <taxon>Debaryomycetaceae</taxon>
        <taxon>Candida/Lodderomyces clade</taxon>
        <taxon>Candida</taxon>
    </lineage>
</organism>
<evidence type="ECO:0000255" key="1">
    <source>
        <dbReference type="HAMAP-Rule" id="MF_03217"/>
    </source>
</evidence>
<evidence type="ECO:0000256" key="2">
    <source>
        <dbReference type="SAM" id="MobiDB-lite"/>
    </source>
</evidence>